<name>PYRR_RALN1</name>
<gene>
    <name evidence="2" type="primary">pyrR</name>
    <name type="ordered locus">RSc0677</name>
    <name type="ORF">RS01582</name>
</gene>
<sequence length="174" mass="18929">MTSQQIDAEALYQSLVAQLRTRMAGTPAGDWSVAGIVSGGAWIAARLALDLGLREYGIVNVALHRDDYAKKGLHAQAQPTTLPFEVEERRILLVDDVLATGRTIRAAINELFDYGRPAAVELAVLVDRGERQLPIAPDYIGERIALAADESLVLRQEGEGASARFTFTREPKTA</sequence>
<reference key="1">
    <citation type="journal article" date="2002" name="Nature">
        <title>Genome sequence of the plant pathogen Ralstonia solanacearum.</title>
        <authorList>
            <person name="Salanoubat M."/>
            <person name="Genin S."/>
            <person name="Artiguenave F."/>
            <person name="Gouzy J."/>
            <person name="Mangenot S."/>
            <person name="Arlat M."/>
            <person name="Billault A."/>
            <person name="Brottier P."/>
            <person name="Camus J.-C."/>
            <person name="Cattolico L."/>
            <person name="Chandler M."/>
            <person name="Choisne N."/>
            <person name="Claudel-Renard C."/>
            <person name="Cunnac S."/>
            <person name="Demange N."/>
            <person name="Gaspin C."/>
            <person name="Lavie M."/>
            <person name="Moisan A."/>
            <person name="Robert C."/>
            <person name="Saurin W."/>
            <person name="Schiex T."/>
            <person name="Siguier P."/>
            <person name="Thebault P."/>
            <person name="Whalen M."/>
            <person name="Wincker P."/>
            <person name="Levy M."/>
            <person name="Weissenbach J."/>
            <person name="Boucher C.A."/>
        </authorList>
    </citation>
    <scope>NUCLEOTIDE SEQUENCE [LARGE SCALE GENOMIC DNA]</scope>
    <source>
        <strain>ATCC BAA-1114 / GMI1000</strain>
    </source>
</reference>
<protein>
    <recommendedName>
        <fullName evidence="2">Bifunctional protein PyrR</fullName>
    </recommendedName>
    <domain>
        <recommendedName>
            <fullName evidence="2">Pyrimidine operon regulatory protein</fullName>
        </recommendedName>
    </domain>
    <domain>
        <recommendedName>
            <fullName evidence="2">Uracil phosphoribosyltransferase</fullName>
            <shortName evidence="2">UPRTase</shortName>
            <ecNumber evidence="2">2.4.2.9</ecNumber>
        </recommendedName>
    </domain>
</protein>
<feature type="chain" id="PRO_0000183052" description="Bifunctional protein PyrR">
    <location>
        <begin position="1"/>
        <end position="174"/>
    </location>
</feature>
<feature type="short sequence motif" description="PRPP-binding" evidence="2">
    <location>
        <begin position="91"/>
        <end position="103"/>
    </location>
</feature>
<feature type="binding site" evidence="1">
    <location>
        <begin position="38"/>
        <end position="39"/>
    </location>
    <ligand>
        <name>substrate</name>
    </ligand>
</feature>
<feature type="binding site" evidence="1">
    <location>
        <begin position="95"/>
        <end position="103"/>
    </location>
    <ligand>
        <name>substrate</name>
    </ligand>
</feature>
<feature type="binding site" evidence="1">
    <location>
        <position position="128"/>
    </location>
    <ligand>
        <name>substrate</name>
    </ligand>
</feature>
<dbReference type="EC" id="2.4.2.9" evidence="2"/>
<dbReference type="EMBL" id="AL646052">
    <property type="protein sequence ID" value="CAD14207.1"/>
    <property type="molecule type" value="Genomic_DNA"/>
</dbReference>
<dbReference type="RefSeq" id="WP_011000632.1">
    <property type="nucleotide sequence ID" value="NC_003295.1"/>
</dbReference>
<dbReference type="SMR" id="Q8Y1L3"/>
<dbReference type="STRING" id="267608.RSc0677"/>
<dbReference type="EnsemblBacteria" id="CAD14207">
    <property type="protein sequence ID" value="CAD14207"/>
    <property type="gene ID" value="RSc0677"/>
</dbReference>
<dbReference type="KEGG" id="rso:RSc0677"/>
<dbReference type="eggNOG" id="COG2065">
    <property type="taxonomic scope" value="Bacteria"/>
</dbReference>
<dbReference type="HOGENOM" id="CLU_094234_1_1_4"/>
<dbReference type="Proteomes" id="UP000001436">
    <property type="component" value="Chromosome"/>
</dbReference>
<dbReference type="GO" id="GO:0004845">
    <property type="term" value="F:uracil phosphoribosyltransferase activity"/>
    <property type="evidence" value="ECO:0007669"/>
    <property type="project" value="UniProtKB-UniRule"/>
</dbReference>
<dbReference type="GO" id="GO:0006355">
    <property type="term" value="P:regulation of DNA-templated transcription"/>
    <property type="evidence" value="ECO:0007669"/>
    <property type="project" value="UniProtKB-UniRule"/>
</dbReference>
<dbReference type="CDD" id="cd06223">
    <property type="entry name" value="PRTases_typeI"/>
    <property type="match status" value="1"/>
</dbReference>
<dbReference type="Gene3D" id="3.40.50.2020">
    <property type="match status" value="1"/>
</dbReference>
<dbReference type="HAMAP" id="MF_01219">
    <property type="entry name" value="PyrR"/>
    <property type="match status" value="1"/>
</dbReference>
<dbReference type="InterPro" id="IPR000836">
    <property type="entry name" value="PRibTrfase_dom"/>
</dbReference>
<dbReference type="InterPro" id="IPR029057">
    <property type="entry name" value="PRTase-like"/>
</dbReference>
<dbReference type="InterPro" id="IPR023050">
    <property type="entry name" value="PyrR"/>
</dbReference>
<dbReference type="InterPro" id="IPR050137">
    <property type="entry name" value="PyrR_bifunctional"/>
</dbReference>
<dbReference type="NCBIfam" id="NF003545">
    <property type="entry name" value="PRK05205.1-1"/>
    <property type="match status" value="1"/>
</dbReference>
<dbReference type="PANTHER" id="PTHR11608">
    <property type="entry name" value="BIFUNCTIONAL PROTEIN PYRR"/>
    <property type="match status" value="1"/>
</dbReference>
<dbReference type="PANTHER" id="PTHR11608:SF0">
    <property type="entry name" value="BIFUNCTIONAL PROTEIN PYRR"/>
    <property type="match status" value="1"/>
</dbReference>
<dbReference type="Pfam" id="PF00156">
    <property type="entry name" value="Pribosyltran"/>
    <property type="match status" value="1"/>
</dbReference>
<dbReference type="SUPFAM" id="SSF53271">
    <property type="entry name" value="PRTase-like"/>
    <property type="match status" value="1"/>
</dbReference>
<dbReference type="PROSITE" id="PS00103">
    <property type="entry name" value="PUR_PYR_PR_TRANSFER"/>
    <property type="match status" value="1"/>
</dbReference>
<keyword id="KW-0328">Glycosyltransferase</keyword>
<keyword id="KW-1185">Reference proteome</keyword>
<keyword id="KW-0804">Transcription</keyword>
<keyword id="KW-0805">Transcription regulation</keyword>
<keyword id="KW-0808">Transferase</keyword>
<evidence type="ECO:0000250" key="1"/>
<evidence type="ECO:0000255" key="2">
    <source>
        <dbReference type="HAMAP-Rule" id="MF_01219"/>
    </source>
</evidence>
<comment type="function">
    <text evidence="2">Regulates the transcription of the pyrimidine nucleotide (pyr) operon in response to exogenous pyrimidines.</text>
</comment>
<comment type="function">
    <text evidence="2">Also displays a weak uracil phosphoribosyltransferase activity which is not physiologically significant.</text>
</comment>
<comment type="catalytic activity">
    <reaction evidence="2">
        <text>UMP + diphosphate = 5-phospho-alpha-D-ribose 1-diphosphate + uracil</text>
        <dbReference type="Rhea" id="RHEA:13017"/>
        <dbReference type="ChEBI" id="CHEBI:17568"/>
        <dbReference type="ChEBI" id="CHEBI:33019"/>
        <dbReference type="ChEBI" id="CHEBI:57865"/>
        <dbReference type="ChEBI" id="CHEBI:58017"/>
        <dbReference type="EC" id="2.4.2.9"/>
    </reaction>
</comment>
<comment type="similarity">
    <text evidence="2">Belongs to the purine/pyrimidine phosphoribosyltransferase family. PyrR subfamily.</text>
</comment>
<proteinExistence type="inferred from homology"/>
<organism>
    <name type="scientific">Ralstonia nicotianae (strain ATCC BAA-1114 / GMI1000)</name>
    <name type="common">Ralstonia solanacearum</name>
    <dbReference type="NCBI Taxonomy" id="267608"/>
    <lineage>
        <taxon>Bacteria</taxon>
        <taxon>Pseudomonadati</taxon>
        <taxon>Pseudomonadota</taxon>
        <taxon>Betaproteobacteria</taxon>
        <taxon>Burkholderiales</taxon>
        <taxon>Burkholderiaceae</taxon>
        <taxon>Ralstonia</taxon>
        <taxon>Ralstonia solanacearum species complex</taxon>
    </lineage>
</organism>
<accession>Q8Y1L3</accession>